<gene>
    <name type="primary">SRI</name>
</gene>
<sequence length="198" mass="21676">MAYPGHPGAGGGYYPGGYGGAPGGPAFPGQTQDPLYGYFAAVAGQDGQIDADELQRCLTQSGIAGGYKPFNLETCRLMVSMLDRDMSGTMGFNEFKELWAVLNGWRQHFISFDTDRSGTVDPQELQKALTTMGFRLSPQAVNSIAKRYSTNGKITFDDYIACCVKLRALTDSFRRRDTAQQGVVNFPYDDFIQCVMSV</sequence>
<dbReference type="EMBL" id="CR861142">
    <property type="protein sequence ID" value="CAH93217.1"/>
    <property type="molecule type" value="mRNA"/>
</dbReference>
<dbReference type="RefSeq" id="NP_001127644.1">
    <property type="nucleotide sequence ID" value="NM_001134172.1"/>
</dbReference>
<dbReference type="SMR" id="Q5R4U9"/>
<dbReference type="FunCoup" id="Q5R4U9">
    <property type="interactions" value="901"/>
</dbReference>
<dbReference type="STRING" id="9601.ENSPPYP00000019992"/>
<dbReference type="Ensembl" id="ENSPPYT00000020780.2">
    <property type="protein sequence ID" value="ENSPPYP00000019992.1"/>
    <property type="gene ID" value="ENSPPYG00000017838.2"/>
</dbReference>
<dbReference type="GeneID" id="100174725"/>
<dbReference type="KEGG" id="pon:100174725"/>
<dbReference type="CTD" id="6717"/>
<dbReference type="eggNOG" id="KOG0037">
    <property type="taxonomic scope" value="Eukaryota"/>
</dbReference>
<dbReference type="GeneTree" id="ENSGT00940000153979"/>
<dbReference type="HOGENOM" id="CLU_051357_4_1_1"/>
<dbReference type="InParanoid" id="Q5R4U9"/>
<dbReference type="OMA" id="LNQFIYC"/>
<dbReference type="OrthoDB" id="186625at2759"/>
<dbReference type="TreeFam" id="TF314682"/>
<dbReference type="Proteomes" id="UP000001595">
    <property type="component" value="Chromosome 7"/>
</dbReference>
<dbReference type="GO" id="GO:0042584">
    <property type="term" value="C:chromaffin granule membrane"/>
    <property type="evidence" value="ECO:0007669"/>
    <property type="project" value="Ensembl"/>
</dbReference>
<dbReference type="GO" id="GO:0005829">
    <property type="term" value="C:cytosol"/>
    <property type="evidence" value="ECO:0007669"/>
    <property type="project" value="Ensembl"/>
</dbReference>
<dbReference type="GO" id="GO:0070062">
    <property type="term" value="C:extracellular exosome"/>
    <property type="evidence" value="ECO:0007669"/>
    <property type="project" value="Ensembl"/>
</dbReference>
<dbReference type="GO" id="GO:0005654">
    <property type="term" value="C:nucleoplasm"/>
    <property type="evidence" value="ECO:0007669"/>
    <property type="project" value="Ensembl"/>
</dbReference>
<dbReference type="GO" id="GO:0005886">
    <property type="term" value="C:plasma membrane"/>
    <property type="evidence" value="ECO:0007669"/>
    <property type="project" value="Ensembl"/>
</dbReference>
<dbReference type="GO" id="GO:0033017">
    <property type="term" value="C:sarcoplasmic reticulum membrane"/>
    <property type="evidence" value="ECO:0007669"/>
    <property type="project" value="UniProtKB-SubCell"/>
</dbReference>
<dbReference type="GO" id="GO:0030018">
    <property type="term" value="C:Z disc"/>
    <property type="evidence" value="ECO:0007669"/>
    <property type="project" value="Ensembl"/>
</dbReference>
<dbReference type="GO" id="GO:0005509">
    <property type="term" value="F:calcium ion binding"/>
    <property type="evidence" value="ECO:0007669"/>
    <property type="project" value="Ensembl"/>
</dbReference>
<dbReference type="GO" id="GO:0140297">
    <property type="term" value="F:DNA-binding transcription factor binding"/>
    <property type="evidence" value="ECO:0007669"/>
    <property type="project" value="Ensembl"/>
</dbReference>
<dbReference type="GO" id="GO:0002020">
    <property type="term" value="F:protease binding"/>
    <property type="evidence" value="ECO:0007669"/>
    <property type="project" value="Ensembl"/>
</dbReference>
<dbReference type="GO" id="GO:0046982">
    <property type="term" value="F:protein heterodimerization activity"/>
    <property type="evidence" value="ECO:0007669"/>
    <property type="project" value="Ensembl"/>
</dbReference>
<dbReference type="GO" id="GO:0140311">
    <property type="term" value="F:protein sequestering activity"/>
    <property type="evidence" value="ECO:0007669"/>
    <property type="project" value="Ensembl"/>
</dbReference>
<dbReference type="GO" id="GO:0140416">
    <property type="term" value="F:transcription regulator inhibitor activity"/>
    <property type="evidence" value="ECO:0007669"/>
    <property type="project" value="Ensembl"/>
</dbReference>
<dbReference type="GO" id="GO:0006816">
    <property type="term" value="P:calcium ion transport"/>
    <property type="evidence" value="ECO:0007669"/>
    <property type="project" value="Ensembl"/>
</dbReference>
<dbReference type="GO" id="GO:0055118">
    <property type="term" value="P:negative regulation of cardiac muscle contraction"/>
    <property type="evidence" value="ECO:0007669"/>
    <property type="project" value="Ensembl"/>
</dbReference>
<dbReference type="GO" id="GO:0010459">
    <property type="term" value="P:negative regulation of heart rate"/>
    <property type="evidence" value="ECO:0007669"/>
    <property type="project" value="Ensembl"/>
</dbReference>
<dbReference type="GO" id="GO:0051281">
    <property type="term" value="P:positive regulation of release of sequestered calcium ion into cytosol"/>
    <property type="evidence" value="ECO:0007669"/>
    <property type="project" value="Ensembl"/>
</dbReference>
<dbReference type="GO" id="GO:0086004">
    <property type="term" value="P:regulation of cardiac muscle cell contraction"/>
    <property type="evidence" value="ECO:0007669"/>
    <property type="project" value="Ensembl"/>
</dbReference>
<dbReference type="GO" id="GO:1901844">
    <property type="term" value="P:regulation of cell communication by electrical coupling involved in cardiac conduction"/>
    <property type="evidence" value="ECO:0007669"/>
    <property type="project" value="Ensembl"/>
</dbReference>
<dbReference type="GO" id="GO:0061178">
    <property type="term" value="P:regulation of insulin secretion involved in cellular response to glucose stimulus"/>
    <property type="evidence" value="ECO:0007669"/>
    <property type="project" value="Ensembl"/>
</dbReference>
<dbReference type="GO" id="GO:1901077">
    <property type="term" value="P:regulation of relaxation of muscle"/>
    <property type="evidence" value="ECO:0007669"/>
    <property type="project" value="Ensembl"/>
</dbReference>
<dbReference type="GO" id="GO:0010880">
    <property type="term" value="P:regulation of release of sequestered calcium ion into cytosol by sarcoplasmic reticulum"/>
    <property type="evidence" value="ECO:0007669"/>
    <property type="project" value="Ensembl"/>
</dbReference>
<dbReference type="CDD" id="cd16187">
    <property type="entry name" value="EFh_PEF_sorcin"/>
    <property type="match status" value="1"/>
</dbReference>
<dbReference type="FunFam" id="1.10.238.10:FF:000087">
    <property type="entry name" value="Sorcin"/>
    <property type="match status" value="1"/>
</dbReference>
<dbReference type="Gene3D" id="6.10.140.900">
    <property type="match status" value="1"/>
</dbReference>
<dbReference type="Gene3D" id="1.10.238.10">
    <property type="entry name" value="EF-hand"/>
    <property type="match status" value="1"/>
</dbReference>
<dbReference type="InterPro" id="IPR011992">
    <property type="entry name" value="EF-hand-dom_pair"/>
</dbReference>
<dbReference type="InterPro" id="IPR018247">
    <property type="entry name" value="EF_Hand_1_Ca_BS"/>
</dbReference>
<dbReference type="InterPro" id="IPR002048">
    <property type="entry name" value="EF_hand_dom"/>
</dbReference>
<dbReference type="PANTHER" id="PTHR46735">
    <property type="entry name" value="CALPAIN, SMALL SUBUNIT 1 A-RELATED"/>
    <property type="match status" value="1"/>
</dbReference>
<dbReference type="PANTHER" id="PTHR46735:SF7">
    <property type="entry name" value="SORCIN"/>
    <property type="match status" value="1"/>
</dbReference>
<dbReference type="Pfam" id="PF13499">
    <property type="entry name" value="EF-hand_7"/>
    <property type="match status" value="1"/>
</dbReference>
<dbReference type="Pfam" id="PF13833">
    <property type="entry name" value="EF-hand_8"/>
    <property type="match status" value="1"/>
</dbReference>
<dbReference type="SMART" id="SM00054">
    <property type="entry name" value="EFh"/>
    <property type="match status" value="2"/>
</dbReference>
<dbReference type="SUPFAM" id="SSF47473">
    <property type="entry name" value="EF-hand"/>
    <property type="match status" value="1"/>
</dbReference>
<dbReference type="PROSITE" id="PS00018">
    <property type="entry name" value="EF_HAND_1"/>
    <property type="match status" value="2"/>
</dbReference>
<dbReference type="PROSITE" id="PS50222">
    <property type="entry name" value="EF_HAND_2"/>
    <property type="match status" value="4"/>
</dbReference>
<keyword id="KW-0106">Calcium</keyword>
<keyword id="KW-0963">Cytoplasm</keyword>
<keyword id="KW-0472">Membrane</keyword>
<keyword id="KW-0479">Metal-binding</keyword>
<keyword id="KW-1185">Reference proteome</keyword>
<keyword id="KW-0677">Repeat</keyword>
<keyword id="KW-0703">Sarcoplasmic reticulum</keyword>
<comment type="function">
    <text evidence="1">Calcium-binding protein that modulates excitation-contraction coupling in the heart. Contributes to calcium homeostasis in the heart sarcoplasmic reticulum. Modulates the activity of RYR2 calcium channels (By similarity).</text>
</comment>
<comment type="subunit">
    <text evidence="1">Homodimer. Interacts with GCA, RYR2 and ANXA7 (By similarity).</text>
</comment>
<comment type="subcellular location">
    <subcellularLocation>
        <location evidence="1">Cytoplasm</location>
    </subcellularLocation>
    <subcellularLocation>
        <location evidence="1">Sarcoplasmic reticulum membrane</location>
        <topology evidence="1">Peripheral membrane protein</topology>
        <orientation evidence="1">Cytoplasmic side</orientation>
    </subcellularLocation>
    <text evidence="1">Relocates to the sarcoplasmic reticulum membrane in response to elevated calcium levels.</text>
</comment>
<comment type="miscellaneous">
    <text evidence="1">This protein has been shown to bind calcium with high affinity.</text>
</comment>
<organism>
    <name type="scientific">Pongo abelii</name>
    <name type="common">Sumatran orangutan</name>
    <name type="synonym">Pongo pygmaeus abelii</name>
    <dbReference type="NCBI Taxonomy" id="9601"/>
    <lineage>
        <taxon>Eukaryota</taxon>
        <taxon>Metazoa</taxon>
        <taxon>Chordata</taxon>
        <taxon>Craniata</taxon>
        <taxon>Vertebrata</taxon>
        <taxon>Euteleostomi</taxon>
        <taxon>Mammalia</taxon>
        <taxon>Eutheria</taxon>
        <taxon>Euarchontoglires</taxon>
        <taxon>Primates</taxon>
        <taxon>Haplorrhini</taxon>
        <taxon>Catarrhini</taxon>
        <taxon>Hominidae</taxon>
        <taxon>Pongo</taxon>
    </lineage>
</organism>
<name>SORCN_PONAB</name>
<feature type="chain" id="PRO_0000073727" description="Sorcin">
    <location>
        <begin position="1"/>
        <end position="198"/>
    </location>
</feature>
<feature type="domain" description="EF-hand 1" evidence="2">
    <location>
        <begin position="45"/>
        <end position="64"/>
    </location>
</feature>
<feature type="domain" description="EF-hand 2" evidence="2">
    <location>
        <begin position="70"/>
        <end position="98"/>
    </location>
</feature>
<feature type="domain" description="EF-hand 3" evidence="2">
    <location>
        <begin position="100"/>
        <end position="135"/>
    </location>
</feature>
<feature type="domain" description="EF-hand 4" evidence="2">
    <location>
        <begin position="151"/>
        <end position="169"/>
    </location>
</feature>
<feature type="binding site" evidence="2">
    <location>
        <position position="83"/>
    </location>
    <ligand>
        <name>Ca(2+)</name>
        <dbReference type="ChEBI" id="CHEBI:29108"/>
        <label>1</label>
    </ligand>
</feature>
<feature type="binding site" evidence="2">
    <location>
        <position position="85"/>
    </location>
    <ligand>
        <name>Ca(2+)</name>
        <dbReference type="ChEBI" id="CHEBI:29108"/>
        <label>1</label>
    </ligand>
</feature>
<feature type="binding site" evidence="2">
    <location>
        <position position="87"/>
    </location>
    <ligand>
        <name>Ca(2+)</name>
        <dbReference type="ChEBI" id="CHEBI:29108"/>
        <label>1</label>
    </ligand>
</feature>
<feature type="binding site" evidence="2">
    <location>
        <position position="89"/>
    </location>
    <ligand>
        <name>Ca(2+)</name>
        <dbReference type="ChEBI" id="CHEBI:29108"/>
        <label>1</label>
    </ligand>
</feature>
<feature type="binding site" evidence="2">
    <location>
        <position position="94"/>
    </location>
    <ligand>
        <name>Ca(2+)</name>
        <dbReference type="ChEBI" id="CHEBI:29108"/>
        <label>1</label>
    </ligand>
</feature>
<feature type="binding site" evidence="2">
    <location>
        <position position="113"/>
    </location>
    <ligand>
        <name>Ca(2+)</name>
        <dbReference type="ChEBI" id="CHEBI:29108"/>
        <label>2</label>
    </ligand>
</feature>
<feature type="binding site" evidence="2">
    <location>
        <position position="115"/>
    </location>
    <ligand>
        <name>Ca(2+)</name>
        <dbReference type="ChEBI" id="CHEBI:29108"/>
        <label>2</label>
    </ligand>
</feature>
<feature type="binding site" evidence="2">
    <location>
        <position position="117"/>
    </location>
    <ligand>
        <name>Ca(2+)</name>
        <dbReference type="ChEBI" id="CHEBI:29108"/>
        <label>2</label>
    </ligand>
</feature>
<feature type="binding site" evidence="2">
    <location>
        <position position="119"/>
    </location>
    <ligand>
        <name>Ca(2+)</name>
        <dbReference type="ChEBI" id="CHEBI:29108"/>
        <label>2</label>
    </ligand>
</feature>
<feature type="binding site" evidence="2">
    <location>
        <position position="124"/>
    </location>
    <ligand>
        <name>Ca(2+)</name>
        <dbReference type="ChEBI" id="CHEBI:29108"/>
        <label>2</label>
    </ligand>
</feature>
<evidence type="ECO:0000250" key="1"/>
<evidence type="ECO:0000255" key="2">
    <source>
        <dbReference type="PROSITE-ProRule" id="PRU00448"/>
    </source>
</evidence>
<protein>
    <recommendedName>
        <fullName>Sorcin</fullName>
    </recommendedName>
</protein>
<proteinExistence type="evidence at transcript level"/>
<accession>Q5R4U9</accession>
<reference key="1">
    <citation type="submission" date="2004-11" db="EMBL/GenBank/DDBJ databases">
        <authorList>
            <consortium name="The German cDNA consortium"/>
        </authorList>
    </citation>
    <scope>NUCLEOTIDE SEQUENCE [LARGE SCALE MRNA]</scope>
    <source>
        <tissue>Brain cortex</tissue>
    </source>
</reference>